<accession>B0BQ48</accession>
<dbReference type="EC" id="3.4.21.88" evidence="1"/>
<dbReference type="EMBL" id="CP000687">
    <property type="protein sequence ID" value="ABY69683.1"/>
    <property type="molecule type" value="Genomic_DNA"/>
</dbReference>
<dbReference type="RefSeq" id="WP_005608326.1">
    <property type="nucleotide sequence ID" value="NC_010278.1"/>
</dbReference>
<dbReference type="SMR" id="B0BQ48"/>
<dbReference type="MEROPS" id="S24.001"/>
<dbReference type="KEGG" id="apj:APJL_1127"/>
<dbReference type="HOGENOM" id="CLU_066192_45_3_6"/>
<dbReference type="Proteomes" id="UP000008547">
    <property type="component" value="Chromosome"/>
</dbReference>
<dbReference type="GO" id="GO:0003677">
    <property type="term" value="F:DNA binding"/>
    <property type="evidence" value="ECO:0007669"/>
    <property type="project" value="UniProtKB-UniRule"/>
</dbReference>
<dbReference type="GO" id="GO:0004252">
    <property type="term" value="F:serine-type endopeptidase activity"/>
    <property type="evidence" value="ECO:0007669"/>
    <property type="project" value="UniProtKB-UniRule"/>
</dbReference>
<dbReference type="GO" id="GO:0006281">
    <property type="term" value="P:DNA repair"/>
    <property type="evidence" value="ECO:0007669"/>
    <property type="project" value="UniProtKB-UniRule"/>
</dbReference>
<dbReference type="GO" id="GO:0006260">
    <property type="term" value="P:DNA replication"/>
    <property type="evidence" value="ECO:0007669"/>
    <property type="project" value="UniProtKB-UniRule"/>
</dbReference>
<dbReference type="GO" id="GO:0045892">
    <property type="term" value="P:negative regulation of DNA-templated transcription"/>
    <property type="evidence" value="ECO:0007669"/>
    <property type="project" value="UniProtKB-UniRule"/>
</dbReference>
<dbReference type="GO" id="GO:0006508">
    <property type="term" value="P:proteolysis"/>
    <property type="evidence" value="ECO:0007669"/>
    <property type="project" value="InterPro"/>
</dbReference>
<dbReference type="GO" id="GO:0009432">
    <property type="term" value="P:SOS response"/>
    <property type="evidence" value="ECO:0007669"/>
    <property type="project" value="UniProtKB-UniRule"/>
</dbReference>
<dbReference type="CDD" id="cd06529">
    <property type="entry name" value="S24_LexA-like"/>
    <property type="match status" value="1"/>
</dbReference>
<dbReference type="FunFam" id="1.10.10.10:FF:000009">
    <property type="entry name" value="LexA repressor"/>
    <property type="match status" value="1"/>
</dbReference>
<dbReference type="FunFam" id="2.10.109.10:FF:000001">
    <property type="entry name" value="LexA repressor"/>
    <property type="match status" value="1"/>
</dbReference>
<dbReference type="Gene3D" id="2.10.109.10">
    <property type="entry name" value="Umud Fragment, subunit A"/>
    <property type="match status" value="1"/>
</dbReference>
<dbReference type="Gene3D" id="1.10.10.10">
    <property type="entry name" value="Winged helix-like DNA-binding domain superfamily/Winged helix DNA-binding domain"/>
    <property type="match status" value="1"/>
</dbReference>
<dbReference type="HAMAP" id="MF_00015">
    <property type="entry name" value="LexA"/>
    <property type="match status" value="1"/>
</dbReference>
<dbReference type="InterPro" id="IPR006200">
    <property type="entry name" value="LexA"/>
</dbReference>
<dbReference type="InterPro" id="IPR039418">
    <property type="entry name" value="LexA-like"/>
</dbReference>
<dbReference type="InterPro" id="IPR036286">
    <property type="entry name" value="LexA/Signal_pep-like_sf"/>
</dbReference>
<dbReference type="InterPro" id="IPR006199">
    <property type="entry name" value="LexA_DNA-bd_dom"/>
</dbReference>
<dbReference type="InterPro" id="IPR050077">
    <property type="entry name" value="LexA_repressor"/>
</dbReference>
<dbReference type="InterPro" id="IPR006197">
    <property type="entry name" value="Peptidase_S24_LexA"/>
</dbReference>
<dbReference type="InterPro" id="IPR015927">
    <property type="entry name" value="Peptidase_S24_S26A/B/C"/>
</dbReference>
<dbReference type="InterPro" id="IPR036388">
    <property type="entry name" value="WH-like_DNA-bd_sf"/>
</dbReference>
<dbReference type="InterPro" id="IPR036390">
    <property type="entry name" value="WH_DNA-bd_sf"/>
</dbReference>
<dbReference type="NCBIfam" id="TIGR00498">
    <property type="entry name" value="lexA"/>
    <property type="match status" value="1"/>
</dbReference>
<dbReference type="PANTHER" id="PTHR33516">
    <property type="entry name" value="LEXA REPRESSOR"/>
    <property type="match status" value="1"/>
</dbReference>
<dbReference type="PANTHER" id="PTHR33516:SF2">
    <property type="entry name" value="LEXA REPRESSOR-RELATED"/>
    <property type="match status" value="1"/>
</dbReference>
<dbReference type="Pfam" id="PF01726">
    <property type="entry name" value="LexA_DNA_bind"/>
    <property type="match status" value="1"/>
</dbReference>
<dbReference type="Pfam" id="PF00717">
    <property type="entry name" value="Peptidase_S24"/>
    <property type="match status" value="1"/>
</dbReference>
<dbReference type="PRINTS" id="PR00726">
    <property type="entry name" value="LEXASERPTASE"/>
</dbReference>
<dbReference type="SUPFAM" id="SSF51306">
    <property type="entry name" value="LexA/Signal peptidase"/>
    <property type="match status" value="1"/>
</dbReference>
<dbReference type="SUPFAM" id="SSF46785">
    <property type="entry name" value="Winged helix' DNA-binding domain"/>
    <property type="match status" value="1"/>
</dbReference>
<comment type="function">
    <text evidence="1">Represses a number of genes involved in the response to DNA damage (SOS response), including recA and lexA. In the presence of single-stranded DNA, RecA interacts with LexA causing an autocatalytic cleavage which disrupts the DNA-binding part of LexA, leading to derepression of the SOS regulon and eventually DNA repair.</text>
</comment>
<comment type="catalytic activity">
    <reaction evidence="1">
        <text>Hydrolysis of Ala-|-Gly bond in repressor LexA.</text>
        <dbReference type="EC" id="3.4.21.88"/>
    </reaction>
</comment>
<comment type="subunit">
    <text evidence="1">Homodimer.</text>
</comment>
<comment type="similarity">
    <text evidence="1">Belongs to the peptidase S24 family.</text>
</comment>
<feature type="chain" id="PRO_1000089541" description="LexA repressor">
    <location>
        <begin position="1"/>
        <end position="210"/>
    </location>
</feature>
<feature type="DNA-binding region" description="H-T-H motif" evidence="1">
    <location>
        <begin position="30"/>
        <end position="50"/>
    </location>
</feature>
<feature type="active site" description="For autocatalytic cleavage activity" evidence="1">
    <location>
        <position position="127"/>
    </location>
</feature>
<feature type="active site" description="For autocatalytic cleavage activity" evidence="1">
    <location>
        <position position="164"/>
    </location>
</feature>
<feature type="site" description="Cleavage; by autolysis" evidence="1">
    <location>
        <begin position="92"/>
        <end position="93"/>
    </location>
</feature>
<organism>
    <name type="scientific">Actinobacillus pleuropneumoniae serotype 3 (strain JL03)</name>
    <dbReference type="NCBI Taxonomy" id="434271"/>
    <lineage>
        <taxon>Bacteria</taxon>
        <taxon>Pseudomonadati</taxon>
        <taxon>Pseudomonadota</taxon>
        <taxon>Gammaproteobacteria</taxon>
        <taxon>Pasteurellales</taxon>
        <taxon>Pasteurellaceae</taxon>
        <taxon>Actinobacillus</taxon>
    </lineage>
</organism>
<sequence length="210" mass="23369">MSRKHLTARQQEIFDFVKHHIETTGMPPTRVEIAREIGFKSPNAAEEHLKALARKGYIEMLSGTSRGIRILVDNEETAANDDGLPLIGKVAAGTPIMAIEHVESHYPVNGAMFNPNADYLLKVNGNSMEKIGILDGDLLAVHKTNFARNGQVVVARVDDEVTVKRLEKKGDLIYLHPENDELQPIIVDPRIEYIEIEGIAVGVIRNNAWM</sequence>
<gene>
    <name evidence="1" type="primary">lexA</name>
    <name type="ordered locus">APJL_1127</name>
</gene>
<reference key="1">
    <citation type="journal article" date="2008" name="PLoS ONE">
        <title>Genome biology of Actinobacillus pleuropneumoniae JL03, an isolate of serotype 3 prevalent in China.</title>
        <authorList>
            <person name="Xu Z."/>
            <person name="Zhou Y."/>
            <person name="Li L."/>
            <person name="Zhou R."/>
            <person name="Xiao S."/>
            <person name="Wan Y."/>
            <person name="Zhang S."/>
            <person name="Wang K."/>
            <person name="Li W."/>
            <person name="Li L."/>
            <person name="Jin H."/>
            <person name="Kang M."/>
            <person name="Dalai B."/>
            <person name="Li T."/>
            <person name="Liu L."/>
            <person name="Cheng Y."/>
            <person name="Zhang L."/>
            <person name="Xu T."/>
            <person name="Zheng H."/>
            <person name="Pu S."/>
            <person name="Wang B."/>
            <person name="Gu W."/>
            <person name="Zhang X.L."/>
            <person name="Zhu G.-F."/>
            <person name="Wang S."/>
            <person name="Zhao G.-P."/>
            <person name="Chen H."/>
        </authorList>
    </citation>
    <scope>NUCLEOTIDE SEQUENCE [LARGE SCALE GENOMIC DNA]</scope>
    <source>
        <strain>JL03</strain>
    </source>
</reference>
<proteinExistence type="inferred from homology"/>
<protein>
    <recommendedName>
        <fullName evidence="1">LexA repressor</fullName>
        <ecNumber evidence="1">3.4.21.88</ecNumber>
    </recommendedName>
</protein>
<name>LEXA_ACTPJ</name>
<keyword id="KW-0068">Autocatalytic cleavage</keyword>
<keyword id="KW-0227">DNA damage</keyword>
<keyword id="KW-0234">DNA repair</keyword>
<keyword id="KW-0235">DNA replication</keyword>
<keyword id="KW-0238">DNA-binding</keyword>
<keyword id="KW-0378">Hydrolase</keyword>
<keyword id="KW-0678">Repressor</keyword>
<keyword id="KW-0742">SOS response</keyword>
<keyword id="KW-0804">Transcription</keyword>
<keyword id="KW-0805">Transcription regulation</keyword>
<evidence type="ECO:0000255" key="1">
    <source>
        <dbReference type="HAMAP-Rule" id="MF_00015"/>
    </source>
</evidence>